<organism>
    <name type="scientific">Clostridium kluyveri (strain NBRC 12016)</name>
    <dbReference type="NCBI Taxonomy" id="583346"/>
    <lineage>
        <taxon>Bacteria</taxon>
        <taxon>Bacillati</taxon>
        <taxon>Bacillota</taxon>
        <taxon>Clostridia</taxon>
        <taxon>Eubacteriales</taxon>
        <taxon>Clostridiaceae</taxon>
        <taxon>Clostridium</taxon>
    </lineage>
</organism>
<proteinExistence type="inferred from homology"/>
<gene>
    <name evidence="1" type="primary">era</name>
    <name type="ordered locus">CKR_0829</name>
</gene>
<sequence length="293" mass="33516">MIKSGFITIIGRPNVGKSTLLNSIMGEKLSIVSCKPQTTRNSIQTILTRDDFQLIFVDTPGIHKPKHKLGNYMVKVAESSVKDVDLILFLITPDVEVGKGDRYILEQLKKENIPVFLVVNKIDENPQEKVAQTLKNYSEIFDFAEIIPISALKQKNVKELVELMVKYMPEGPKYYPDDMITDKQEKFVVSEIIREKALRLLSKEVPHGIAVDILSMKKNSKGLYNIEATILCEKESHKGIIIGKKGAMLKKISTYAREDIEKFLDSKVYLEVWVKVKKEWRDSDRLLKELGYK</sequence>
<comment type="function">
    <text evidence="1">An essential GTPase that binds both GDP and GTP, with rapid nucleotide exchange. Plays a role in 16S rRNA processing and 30S ribosomal subunit biogenesis and possibly also in cell cycle regulation and energy metabolism.</text>
</comment>
<comment type="subunit">
    <text evidence="1">Monomer.</text>
</comment>
<comment type="subcellular location">
    <subcellularLocation>
        <location>Cytoplasm</location>
    </subcellularLocation>
    <subcellularLocation>
        <location evidence="1">Cell membrane</location>
        <topology evidence="1">Peripheral membrane protein</topology>
    </subcellularLocation>
</comment>
<comment type="similarity">
    <text evidence="1 2">Belongs to the TRAFAC class TrmE-Era-EngA-EngB-Septin-like GTPase superfamily. Era GTPase family.</text>
</comment>
<name>ERA_CLOK1</name>
<feature type="chain" id="PRO_1000133774" description="GTPase Era">
    <location>
        <begin position="1"/>
        <end position="293"/>
    </location>
</feature>
<feature type="domain" description="Era-type G" evidence="2">
    <location>
        <begin position="3"/>
        <end position="170"/>
    </location>
</feature>
<feature type="domain" description="KH type-2" evidence="1">
    <location>
        <begin position="201"/>
        <end position="278"/>
    </location>
</feature>
<feature type="region of interest" description="G1" evidence="2">
    <location>
        <begin position="11"/>
        <end position="18"/>
    </location>
</feature>
<feature type="region of interest" description="G2" evidence="2">
    <location>
        <begin position="37"/>
        <end position="41"/>
    </location>
</feature>
<feature type="region of interest" description="G3" evidence="2">
    <location>
        <begin position="58"/>
        <end position="61"/>
    </location>
</feature>
<feature type="region of interest" description="G4" evidence="2">
    <location>
        <begin position="120"/>
        <end position="123"/>
    </location>
</feature>
<feature type="region of interest" description="G5" evidence="2">
    <location>
        <begin position="149"/>
        <end position="151"/>
    </location>
</feature>
<feature type="binding site" evidence="1">
    <location>
        <begin position="11"/>
        <end position="18"/>
    </location>
    <ligand>
        <name>GTP</name>
        <dbReference type="ChEBI" id="CHEBI:37565"/>
    </ligand>
</feature>
<feature type="binding site" evidence="1">
    <location>
        <begin position="58"/>
        <end position="62"/>
    </location>
    <ligand>
        <name>GTP</name>
        <dbReference type="ChEBI" id="CHEBI:37565"/>
    </ligand>
</feature>
<feature type="binding site" evidence="1">
    <location>
        <begin position="120"/>
        <end position="123"/>
    </location>
    <ligand>
        <name>GTP</name>
        <dbReference type="ChEBI" id="CHEBI:37565"/>
    </ligand>
</feature>
<protein>
    <recommendedName>
        <fullName evidence="1">GTPase Era</fullName>
    </recommendedName>
</protein>
<dbReference type="EMBL" id="AP009049">
    <property type="protein sequence ID" value="BAH05880.1"/>
    <property type="molecule type" value="Genomic_DNA"/>
</dbReference>
<dbReference type="RefSeq" id="WP_012101295.1">
    <property type="nucleotide sequence ID" value="NC_011837.1"/>
</dbReference>
<dbReference type="SMR" id="B9E055"/>
<dbReference type="KEGG" id="ckr:CKR_0829"/>
<dbReference type="HOGENOM" id="CLU_038009_1_0_9"/>
<dbReference type="Proteomes" id="UP000007969">
    <property type="component" value="Chromosome"/>
</dbReference>
<dbReference type="GO" id="GO:0005829">
    <property type="term" value="C:cytosol"/>
    <property type="evidence" value="ECO:0007669"/>
    <property type="project" value="TreeGrafter"/>
</dbReference>
<dbReference type="GO" id="GO:0005886">
    <property type="term" value="C:plasma membrane"/>
    <property type="evidence" value="ECO:0007669"/>
    <property type="project" value="UniProtKB-SubCell"/>
</dbReference>
<dbReference type="GO" id="GO:0005525">
    <property type="term" value="F:GTP binding"/>
    <property type="evidence" value="ECO:0007669"/>
    <property type="project" value="UniProtKB-UniRule"/>
</dbReference>
<dbReference type="GO" id="GO:0003924">
    <property type="term" value="F:GTPase activity"/>
    <property type="evidence" value="ECO:0007669"/>
    <property type="project" value="UniProtKB-UniRule"/>
</dbReference>
<dbReference type="GO" id="GO:0043024">
    <property type="term" value="F:ribosomal small subunit binding"/>
    <property type="evidence" value="ECO:0007669"/>
    <property type="project" value="TreeGrafter"/>
</dbReference>
<dbReference type="GO" id="GO:0070181">
    <property type="term" value="F:small ribosomal subunit rRNA binding"/>
    <property type="evidence" value="ECO:0007669"/>
    <property type="project" value="UniProtKB-UniRule"/>
</dbReference>
<dbReference type="GO" id="GO:0000028">
    <property type="term" value="P:ribosomal small subunit assembly"/>
    <property type="evidence" value="ECO:0007669"/>
    <property type="project" value="TreeGrafter"/>
</dbReference>
<dbReference type="CDD" id="cd04163">
    <property type="entry name" value="Era"/>
    <property type="match status" value="1"/>
</dbReference>
<dbReference type="CDD" id="cd22534">
    <property type="entry name" value="KH-II_Era"/>
    <property type="match status" value="1"/>
</dbReference>
<dbReference type="FunFam" id="3.30.300.20:FF:000003">
    <property type="entry name" value="GTPase Era"/>
    <property type="match status" value="1"/>
</dbReference>
<dbReference type="FunFam" id="3.40.50.300:FF:000094">
    <property type="entry name" value="GTPase Era"/>
    <property type="match status" value="1"/>
</dbReference>
<dbReference type="Gene3D" id="3.30.300.20">
    <property type="match status" value="1"/>
</dbReference>
<dbReference type="Gene3D" id="3.40.50.300">
    <property type="entry name" value="P-loop containing nucleotide triphosphate hydrolases"/>
    <property type="match status" value="1"/>
</dbReference>
<dbReference type="HAMAP" id="MF_00367">
    <property type="entry name" value="GTPase_Era"/>
    <property type="match status" value="1"/>
</dbReference>
<dbReference type="InterPro" id="IPR030388">
    <property type="entry name" value="G_ERA_dom"/>
</dbReference>
<dbReference type="InterPro" id="IPR006073">
    <property type="entry name" value="GTP-bd"/>
</dbReference>
<dbReference type="InterPro" id="IPR005662">
    <property type="entry name" value="GTPase_Era-like"/>
</dbReference>
<dbReference type="InterPro" id="IPR015946">
    <property type="entry name" value="KH_dom-like_a/b"/>
</dbReference>
<dbReference type="InterPro" id="IPR004044">
    <property type="entry name" value="KH_dom_type_2"/>
</dbReference>
<dbReference type="InterPro" id="IPR009019">
    <property type="entry name" value="KH_sf_prok-type"/>
</dbReference>
<dbReference type="InterPro" id="IPR027417">
    <property type="entry name" value="P-loop_NTPase"/>
</dbReference>
<dbReference type="InterPro" id="IPR005225">
    <property type="entry name" value="Small_GTP-bd"/>
</dbReference>
<dbReference type="NCBIfam" id="TIGR00436">
    <property type="entry name" value="era"/>
    <property type="match status" value="1"/>
</dbReference>
<dbReference type="NCBIfam" id="NF000908">
    <property type="entry name" value="PRK00089.1"/>
    <property type="match status" value="1"/>
</dbReference>
<dbReference type="NCBIfam" id="TIGR00231">
    <property type="entry name" value="small_GTP"/>
    <property type="match status" value="1"/>
</dbReference>
<dbReference type="PANTHER" id="PTHR42698">
    <property type="entry name" value="GTPASE ERA"/>
    <property type="match status" value="1"/>
</dbReference>
<dbReference type="PANTHER" id="PTHR42698:SF1">
    <property type="entry name" value="GTPASE ERA, MITOCHONDRIAL"/>
    <property type="match status" value="1"/>
</dbReference>
<dbReference type="Pfam" id="PF07650">
    <property type="entry name" value="KH_2"/>
    <property type="match status" value="1"/>
</dbReference>
<dbReference type="Pfam" id="PF01926">
    <property type="entry name" value="MMR_HSR1"/>
    <property type="match status" value="1"/>
</dbReference>
<dbReference type="PRINTS" id="PR00449">
    <property type="entry name" value="RASTRNSFRMNG"/>
</dbReference>
<dbReference type="SUPFAM" id="SSF52540">
    <property type="entry name" value="P-loop containing nucleoside triphosphate hydrolases"/>
    <property type="match status" value="1"/>
</dbReference>
<dbReference type="SUPFAM" id="SSF54814">
    <property type="entry name" value="Prokaryotic type KH domain (KH-domain type II)"/>
    <property type="match status" value="1"/>
</dbReference>
<dbReference type="PROSITE" id="PS51713">
    <property type="entry name" value="G_ERA"/>
    <property type="match status" value="1"/>
</dbReference>
<dbReference type="PROSITE" id="PS50823">
    <property type="entry name" value="KH_TYPE_2"/>
    <property type="match status" value="1"/>
</dbReference>
<keyword id="KW-1003">Cell membrane</keyword>
<keyword id="KW-0963">Cytoplasm</keyword>
<keyword id="KW-0342">GTP-binding</keyword>
<keyword id="KW-0472">Membrane</keyword>
<keyword id="KW-0547">Nucleotide-binding</keyword>
<keyword id="KW-0690">Ribosome biogenesis</keyword>
<keyword id="KW-0694">RNA-binding</keyword>
<keyword id="KW-0699">rRNA-binding</keyword>
<evidence type="ECO:0000255" key="1">
    <source>
        <dbReference type="HAMAP-Rule" id="MF_00367"/>
    </source>
</evidence>
<evidence type="ECO:0000255" key="2">
    <source>
        <dbReference type="PROSITE-ProRule" id="PRU01050"/>
    </source>
</evidence>
<reference key="1">
    <citation type="submission" date="2005-09" db="EMBL/GenBank/DDBJ databases">
        <title>Complete genome sequence of Clostridium kluyveri and comparative genomics of Clostridia species.</title>
        <authorList>
            <person name="Inui M."/>
            <person name="Nonaka H."/>
            <person name="Shinoda Y."/>
            <person name="Ikenaga Y."/>
            <person name="Abe M."/>
            <person name="Naito K."/>
            <person name="Vertes A.A."/>
            <person name="Yukawa H."/>
        </authorList>
    </citation>
    <scope>NUCLEOTIDE SEQUENCE [LARGE SCALE GENOMIC DNA]</scope>
    <source>
        <strain>NBRC 12016</strain>
    </source>
</reference>
<accession>B9E055</accession>